<proteinExistence type="evidence at transcript level"/>
<name>POLG_AEVCA</name>
<organism>
    <name type="scientific">Avian encephalomyelitis virus (strain Calnek vaccine)</name>
    <name type="common">AEV</name>
    <dbReference type="NCBI Taxonomy" id="475778"/>
    <lineage>
        <taxon>Viruses</taxon>
        <taxon>Riboviria</taxon>
        <taxon>Orthornavirae</taxon>
        <taxon>Pisuviricota</taxon>
        <taxon>Pisoniviricetes</taxon>
        <taxon>Picornavirales</taxon>
        <taxon>Picornaviridae</taxon>
        <taxon>Heptrevirinae</taxon>
        <taxon>Tremovirus</taxon>
        <taxon>Tremovirus A</taxon>
    </lineage>
</organism>
<dbReference type="EC" id="3.6.1.15"/>
<dbReference type="EC" id="3.4.22.28"/>
<dbReference type="EC" id="2.7.7.48"/>
<dbReference type="EMBL" id="AJ225173">
    <property type="protein sequence ID" value="CAA12416.1"/>
    <property type="molecule type" value="mRNA"/>
</dbReference>
<dbReference type="RefSeq" id="NP_653151.1">
    <property type="nucleotide sequence ID" value="NC_003990.1"/>
</dbReference>
<dbReference type="SMR" id="Q9YLS4"/>
<dbReference type="MEROPS" id="C03.005"/>
<dbReference type="TCDB" id="1.A.122.1.2">
    <property type="family name" value="the avian encephalomyelitis virus protein 3a (aev-3a) family"/>
</dbReference>
<dbReference type="GeneID" id="944582"/>
<dbReference type="KEGG" id="vg:944582"/>
<dbReference type="Proteomes" id="UP000000357">
    <property type="component" value="Segment"/>
</dbReference>
<dbReference type="GO" id="GO:0044162">
    <property type="term" value="C:host cell cytoplasmic vesicle membrane"/>
    <property type="evidence" value="ECO:0007669"/>
    <property type="project" value="UniProtKB-SubCell"/>
</dbReference>
<dbReference type="GO" id="GO:0016020">
    <property type="term" value="C:membrane"/>
    <property type="evidence" value="ECO:0007669"/>
    <property type="project" value="UniProtKB-KW"/>
</dbReference>
<dbReference type="GO" id="GO:0019028">
    <property type="term" value="C:viral capsid"/>
    <property type="evidence" value="ECO:0007669"/>
    <property type="project" value="UniProtKB-KW"/>
</dbReference>
<dbReference type="GO" id="GO:0005524">
    <property type="term" value="F:ATP binding"/>
    <property type="evidence" value="ECO:0007669"/>
    <property type="project" value="UniProtKB-KW"/>
</dbReference>
<dbReference type="GO" id="GO:0015267">
    <property type="term" value="F:channel activity"/>
    <property type="evidence" value="ECO:0007669"/>
    <property type="project" value="UniProtKB-KW"/>
</dbReference>
<dbReference type="GO" id="GO:0004197">
    <property type="term" value="F:cysteine-type endopeptidase activity"/>
    <property type="evidence" value="ECO:0007669"/>
    <property type="project" value="UniProtKB-EC"/>
</dbReference>
<dbReference type="GO" id="GO:0017111">
    <property type="term" value="F:ribonucleoside triphosphate phosphatase activity"/>
    <property type="evidence" value="ECO:0007669"/>
    <property type="project" value="UniProtKB-EC"/>
</dbReference>
<dbReference type="GO" id="GO:0003723">
    <property type="term" value="F:RNA binding"/>
    <property type="evidence" value="ECO:0007669"/>
    <property type="project" value="UniProtKB-KW"/>
</dbReference>
<dbReference type="GO" id="GO:0003724">
    <property type="term" value="F:RNA helicase activity"/>
    <property type="evidence" value="ECO:0007669"/>
    <property type="project" value="InterPro"/>
</dbReference>
<dbReference type="GO" id="GO:0003968">
    <property type="term" value="F:RNA-directed RNA polymerase activity"/>
    <property type="evidence" value="ECO:0007669"/>
    <property type="project" value="UniProtKB-KW"/>
</dbReference>
<dbReference type="GO" id="GO:0005198">
    <property type="term" value="F:structural molecule activity"/>
    <property type="evidence" value="ECO:0007669"/>
    <property type="project" value="InterPro"/>
</dbReference>
<dbReference type="GO" id="GO:0006351">
    <property type="term" value="P:DNA-templated transcription"/>
    <property type="evidence" value="ECO:0007669"/>
    <property type="project" value="InterPro"/>
</dbReference>
<dbReference type="GO" id="GO:0034220">
    <property type="term" value="P:monoatomic ion transmembrane transport"/>
    <property type="evidence" value="ECO:0007669"/>
    <property type="project" value="UniProtKB-KW"/>
</dbReference>
<dbReference type="GO" id="GO:0006508">
    <property type="term" value="P:proteolysis"/>
    <property type="evidence" value="ECO:0007669"/>
    <property type="project" value="UniProtKB-KW"/>
</dbReference>
<dbReference type="GO" id="GO:0046718">
    <property type="term" value="P:symbiont entry into host cell"/>
    <property type="evidence" value="ECO:0007669"/>
    <property type="project" value="UniProtKB-KW"/>
</dbReference>
<dbReference type="GO" id="GO:0039694">
    <property type="term" value="P:viral RNA genome replication"/>
    <property type="evidence" value="ECO:0007669"/>
    <property type="project" value="InterPro"/>
</dbReference>
<dbReference type="GO" id="GO:0019062">
    <property type="term" value="P:virion attachment to host cell"/>
    <property type="evidence" value="ECO:0007669"/>
    <property type="project" value="UniProtKB-KW"/>
</dbReference>
<dbReference type="CDD" id="cd23193">
    <property type="entry name" value="ps-ssRNA_Picornaviridae"/>
    <property type="match status" value="1"/>
</dbReference>
<dbReference type="CDD" id="cd00205">
    <property type="entry name" value="rhv_like"/>
    <property type="match status" value="2"/>
</dbReference>
<dbReference type="Gene3D" id="1.20.960.20">
    <property type="match status" value="1"/>
</dbReference>
<dbReference type="Gene3D" id="2.60.120.20">
    <property type="match status" value="3"/>
</dbReference>
<dbReference type="Gene3D" id="3.30.70.270">
    <property type="match status" value="1"/>
</dbReference>
<dbReference type="Gene3D" id="3.90.1720.10">
    <property type="entry name" value="endopeptidase domain like (from Nostoc punctiforme)"/>
    <property type="match status" value="1"/>
</dbReference>
<dbReference type="Gene3D" id="3.40.50.300">
    <property type="entry name" value="P-loop containing nucleotide triphosphate hydrolases"/>
    <property type="match status" value="1"/>
</dbReference>
<dbReference type="Gene3D" id="2.40.10.10">
    <property type="entry name" value="Trypsin-like serine proteases"/>
    <property type="match status" value="2"/>
</dbReference>
<dbReference type="InterPro" id="IPR043502">
    <property type="entry name" value="DNA/RNA_pol_sf"/>
</dbReference>
<dbReference type="InterPro" id="IPR000605">
    <property type="entry name" value="Helicase_SF3_ssDNA/RNA_vir"/>
</dbReference>
<dbReference type="InterPro" id="IPR014759">
    <property type="entry name" value="Helicase_SF3_ssRNA_vir"/>
</dbReference>
<dbReference type="InterPro" id="IPR024354">
    <property type="entry name" value="Hepatitis_A_VP1-2A"/>
</dbReference>
<dbReference type="InterPro" id="IPR007053">
    <property type="entry name" value="LRAT_dom"/>
</dbReference>
<dbReference type="InterPro" id="IPR027417">
    <property type="entry name" value="P-loop_NTPase"/>
</dbReference>
<dbReference type="InterPro" id="IPR044067">
    <property type="entry name" value="PCV_3C_PRO"/>
</dbReference>
<dbReference type="InterPro" id="IPR000199">
    <property type="entry name" value="Peptidase_C3A/C3B_picornavir"/>
</dbReference>
<dbReference type="InterPro" id="IPR009003">
    <property type="entry name" value="Peptidase_S1_PA"/>
</dbReference>
<dbReference type="InterPro" id="IPR043504">
    <property type="entry name" value="Peptidase_S1_PA_chymotrypsin"/>
</dbReference>
<dbReference type="InterPro" id="IPR001676">
    <property type="entry name" value="Picornavirus_capsid"/>
</dbReference>
<dbReference type="InterPro" id="IPR043128">
    <property type="entry name" value="Rev_trsase/Diguanyl_cyclase"/>
</dbReference>
<dbReference type="InterPro" id="IPR033703">
    <property type="entry name" value="Rhv-like"/>
</dbReference>
<dbReference type="InterPro" id="IPR001205">
    <property type="entry name" value="RNA-dir_pol_C"/>
</dbReference>
<dbReference type="InterPro" id="IPR007094">
    <property type="entry name" value="RNA-dir_pol_PSvirus"/>
</dbReference>
<dbReference type="InterPro" id="IPR029053">
    <property type="entry name" value="Viral_coat"/>
</dbReference>
<dbReference type="Pfam" id="PF12944">
    <property type="entry name" value="HAV_VP"/>
    <property type="match status" value="1"/>
</dbReference>
<dbReference type="Pfam" id="PF04970">
    <property type="entry name" value="LRAT"/>
    <property type="match status" value="1"/>
</dbReference>
<dbReference type="Pfam" id="PF00548">
    <property type="entry name" value="Peptidase_C3"/>
    <property type="match status" value="1"/>
</dbReference>
<dbReference type="Pfam" id="PF00680">
    <property type="entry name" value="RdRP_1"/>
    <property type="match status" value="1"/>
</dbReference>
<dbReference type="Pfam" id="PF00073">
    <property type="entry name" value="Rhv"/>
    <property type="match status" value="2"/>
</dbReference>
<dbReference type="Pfam" id="PF00910">
    <property type="entry name" value="RNA_helicase"/>
    <property type="match status" value="1"/>
</dbReference>
<dbReference type="SUPFAM" id="SSF56672">
    <property type="entry name" value="DNA/RNA polymerases"/>
    <property type="match status" value="1"/>
</dbReference>
<dbReference type="SUPFAM" id="SSF52540">
    <property type="entry name" value="P-loop containing nucleoside triphosphate hydrolases"/>
    <property type="match status" value="1"/>
</dbReference>
<dbReference type="SUPFAM" id="SSF88633">
    <property type="entry name" value="Positive stranded ssRNA viruses"/>
    <property type="match status" value="3"/>
</dbReference>
<dbReference type="SUPFAM" id="SSF50494">
    <property type="entry name" value="Trypsin-like serine proteases"/>
    <property type="match status" value="1"/>
</dbReference>
<dbReference type="PROSITE" id="PS51934">
    <property type="entry name" value="LRAT"/>
    <property type="match status" value="1"/>
</dbReference>
<dbReference type="PROSITE" id="PS51874">
    <property type="entry name" value="PCV_3C_PRO"/>
    <property type="match status" value="1"/>
</dbReference>
<dbReference type="PROSITE" id="PS50507">
    <property type="entry name" value="RDRP_SSRNA_POS"/>
    <property type="match status" value="1"/>
</dbReference>
<dbReference type="PROSITE" id="PS51218">
    <property type="entry name" value="SF3_HELICASE_2"/>
    <property type="match status" value="1"/>
</dbReference>
<accession>Q9YLS4</accession>
<evidence type="ECO:0000250" key="1"/>
<evidence type="ECO:0000255" key="2"/>
<evidence type="ECO:0000255" key="3">
    <source>
        <dbReference type="PROSITE-ProRule" id="PRU00539"/>
    </source>
</evidence>
<evidence type="ECO:0000255" key="4">
    <source>
        <dbReference type="PROSITE-ProRule" id="PRU00551"/>
    </source>
</evidence>
<evidence type="ECO:0000255" key="5">
    <source>
        <dbReference type="PROSITE-ProRule" id="PRU01222"/>
    </source>
</evidence>
<evidence type="ECO:0000255" key="6">
    <source>
        <dbReference type="PROSITE-ProRule" id="PRU01283"/>
    </source>
</evidence>
<evidence type="ECO:0000305" key="7"/>
<organismHost>
    <name type="scientific">Anas</name>
    <name type="common">ducks</name>
    <dbReference type="NCBI Taxonomy" id="8835"/>
</organismHost>
<organismHost>
    <name type="scientific">Gallus gallus</name>
    <name type="common">Chicken</name>
    <dbReference type="NCBI Taxonomy" id="9031"/>
</organismHost>
<organismHost>
    <name type="scientific">Phasianidae</name>
    <name type="common">turkeys</name>
    <dbReference type="NCBI Taxonomy" id="9005"/>
</organismHost>
<feature type="chain" id="PRO_0000310495" description="Genome polyprotein">
    <location>
        <begin position="1"/>
        <end position="2134"/>
    </location>
</feature>
<feature type="chain" id="PRO_0000310496" description="Capsid protein VP0" evidence="2">
    <location>
        <begin position="1"/>
        <end position="242"/>
    </location>
</feature>
<feature type="chain" id="PRO_0000310497" description="Capsid protein VP4" evidence="2">
    <location>
        <begin position="1"/>
        <end position="19"/>
    </location>
</feature>
<feature type="chain" id="PRO_0000310498" description="Capsid protein VP2" evidence="2">
    <location>
        <begin position="20"/>
        <end position="242"/>
    </location>
</feature>
<feature type="chain" id="PRO_0000310499" description="Capsid protein VP3" evidence="2">
    <location>
        <begin position="243"/>
        <end position="487"/>
    </location>
</feature>
<feature type="chain" id="PRO_0000310500" description="Capsid protein VP1" evidence="2">
    <location>
        <begin position="488"/>
        <end position="757"/>
    </location>
</feature>
<feature type="chain" id="PRO_0000310501" description="Protein 2A" evidence="2">
    <location>
        <begin position="758"/>
        <end position="806"/>
    </location>
</feature>
<feature type="chain" id="PRO_0000310502" description="Protein 2B" evidence="2">
    <location>
        <begin position="807"/>
        <end position="1021"/>
    </location>
</feature>
<feature type="chain" id="PRO_0000310503" description="Protein 2C" evidence="2">
    <location>
        <begin position="1022"/>
        <end position="1347"/>
    </location>
</feature>
<feature type="chain" id="PRO_0000310504" description="Protein 3A" evidence="2">
    <location>
        <begin position="1348"/>
        <end position="1412"/>
    </location>
</feature>
<feature type="chain" id="PRO_0000310505" description="Protein 3B" evidence="2">
    <location>
        <begin position="1413"/>
        <end position="1433"/>
    </location>
</feature>
<feature type="chain" id="PRO_0000310506" description="Protease 3C" evidence="2">
    <location>
        <begin position="1434"/>
        <end position="1648"/>
    </location>
</feature>
<feature type="chain" id="PRO_0000310507" description="RNA-directed RNA polymerase 3D-POL" evidence="2">
    <location>
        <begin position="1649"/>
        <end position="2134"/>
    </location>
</feature>
<feature type="topological domain" description="Cytoplasmic" evidence="2">
    <location>
        <begin position="1"/>
        <end position="1377"/>
    </location>
</feature>
<feature type="intramembrane region" evidence="2">
    <location>
        <begin position="1378"/>
        <end position="1392"/>
    </location>
</feature>
<feature type="topological domain" description="Cytoplasmic" evidence="2">
    <location>
        <begin position="1393"/>
        <end position="2134"/>
    </location>
</feature>
<feature type="domain" description="LRAT" evidence="6">
    <location>
        <begin position="781"/>
        <end position="882"/>
    </location>
</feature>
<feature type="domain" description="SF3 helicase" evidence="4">
    <location>
        <begin position="1127"/>
        <end position="1289"/>
    </location>
</feature>
<feature type="domain" description="Peptidase C3" evidence="5">
    <location>
        <begin position="1431"/>
        <end position="1643"/>
    </location>
</feature>
<feature type="domain" description="RdRp catalytic" evidence="3">
    <location>
        <begin position="1880"/>
        <end position="2001"/>
    </location>
</feature>
<feature type="active site" evidence="6">
    <location>
        <position position="791"/>
    </location>
</feature>
<feature type="active site" evidence="6">
    <location>
        <position position="802"/>
    </location>
</feature>
<feature type="active site" description="Acyl-thioester intermediate" evidence="6">
    <location>
        <position position="863"/>
    </location>
</feature>
<feature type="active site" description="For protease 3C activity" evidence="5">
    <location>
        <position position="1477"/>
    </location>
</feature>
<feature type="active site" description="For protease 3C activity" evidence="5">
    <location>
        <position position="1515"/>
    </location>
</feature>
<feature type="active site" description="For protease 3C activity" evidence="5">
    <location>
        <position position="1603"/>
    </location>
</feature>
<feature type="binding site" evidence="4">
    <location>
        <begin position="1153"/>
        <end position="1160"/>
    </location>
    <ligand>
        <name>ATP</name>
        <dbReference type="ChEBI" id="CHEBI:30616"/>
    </ligand>
</feature>
<feature type="site" description="Cleavage" evidence="2">
    <location>
        <begin position="19"/>
        <end position="20"/>
    </location>
</feature>
<feature type="site" description="Cleavage; by protease 3C" evidence="2">
    <location>
        <begin position="242"/>
        <end position="243"/>
    </location>
</feature>
<feature type="site" description="Cleavage; by protease 3C" evidence="2">
    <location>
        <begin position="487"/>
        <end position="488"/>
    </location>
</feature>
<feature type="site" description="Cleavage; by host" evidence="2">
    <location>
        <begin position="757"/>
        <end position="758"/>
    </location>
</feature>
<feature type="site" description="Cleavage; by protease 3C" evidence="1">
    <location>
        <begin position="806"/>
        <end position="807"/>
    </location>
</feature>
<feature type="site" description="Cleavage; by protease 3C" evidence="2">
    <location>
        <begin position="1021"/>
        <end position="1022"/>
    </location>
</feature>
<feature type="site" description="Cleavage; by protease 3C" evidence="2">
    <location>
        <begin position="1347"/>
        <end position="1348"/>
    </location>
</feature>
<feature type="site" description="Cleavage; by protease 3C" evidence="2">
    <location>
        <begin position="1412"/>
        <end position="1413"/>
    </location>
</feature>
<feature type="site" description="Cleavage; by protease 3C" evidence="2">
    <location>
        <begin position="1433"/>
        <end position="1434"/>
    </location>
</feature>
<feature type="site" description="Cleavage; by protease 3C" evidence="1">
    <location>
        <begin position="1648"/>
        <end position="1649"/>
    </location>
</feature>
<feature type="modified residue" description="O-(5'-phospho-RNA)-tyrosine" evidence="1">
    <location>
        <position position="1415"/>
    </location>
</feature>
<comment type="function">
    <text evidence="1">Capsid proteins VP1, VP2, and VP3 form a closed capsid enclosing the viral positive strand RNA genome. All these proteins contain a beta-sheet structure called beta-barrel jelly roll. Together they form an icosahedral capsid (T=3) composed of 60 copies of each VP1, VP2, and VP3, with a diameter of approximately 300 Angstroms. VP1 is situated at the 12 fivefold axes, whereas VP2 and VP3 are located at the quasi-sixfold axes (By similarity).</text>
</comment>
<comment type="function">
    <molecule>Capsid protein VP0</molecule>
    <text evidence="1">VP0 precursor is a component of immature procapsids. The N-terminal domain of VP0, protein VP4, is needed for the assembly of 12 pentamers into the icosahedral structure. Unlike other picornaviruses, AEV VP4 may not be myristoylated (By similarity).</text>
</comment>
<comment type="function">
    <text evidence="1">Protein 2B and 2BC precursor affect membrane integrity and cause an increase in membrane permeability.</text>
</comment>
<comment type="function">
    <molecule>Protein 2C</molecule>
    <text evidence="1">Associates with and induces structural rearrangements of intracellular membranes. It displays RNA-binding, nucleotide binding and NTPase activities (By similarity).</text>
</comment>
<comment type="function">
    <text evidence="1">Protein 3A, via its hydrophobic domain, serves as membrane anchor.</text>
</comment>
<comment type="function">
    <text evidence="1">Protein 3B is covalently linked to the 5'-end of both the positive-strand and negative-strand genomic RNAs. It acts as a genome-linked replication primer (By similarity).</text>
</comment>
<comment type="function">
    <molecule>Protease 3C</molecule>
    <text evidence="1">Cysteine protease that generates mature viral proteins from the precursor polyprotein. In addition to its proteolytic activity, it binds to viral RNA, and thus influences viral genome replication. RNA and substrate bind cooperatively to the protease (By similarity).</text>
</comment>
<comment type="function">
    <text evidence="3">RNA-directed RNA polymerase 3D-POL replicates genomic and antigenomic RNA by recognizing replications specific signals.</text>
</comment>
<comment type="catalytic activity">
    <reaction evidence="3">
        <text>RNA(n) + a ribonucleoside 5'-triphosphate = RNA(n+1) + diphosphate</text>
        <dbReference type="Rhea" id="RHEA:21248"/>
        <dbReference type="Rhea" id="RHEA-COMP:14527"/>
        <dbReference type="Rhea" id="RHEA-COMP:17342"/>
        <dbReference type="ChEBI" id="CHEBI:33019"/>
        <dbReference type="ChEBI" id="CHEBI:61557"/>
        <dbReference type="ChEBI" id="CHEBI:140395"/>
        <dbReference type="EC" id="2.7.7.48"/>
    </reaction>
</comment>
<comment type="catalytic activity">
    <reaction>
        <text>a ribonucleoside 5'-triphosphate + H2O = a ribonucleoside 5'-diphosphate + phosphate + H(+)</text>
        <dbReference type="Rhea" id="RHEA:23680"/>
        <dbReference type="ChEBI" id="CHEBI:15377"/>
        <dbReference type="ChEBI" id="CHEBI:15378"/>
        <dbReference type="ChEBI" id="CHEBI:43474"/>
        <dbReference type="ChEBI" id="CHEBI:57930"/>
        <dbReference type="ChEBI" id="CHEBI:61557"/>
        <dbReference type="EC" id="3.6.1.15"/>
    </reaction>
</comment>
<comment type="catalytic activity">
    <reaction evidence="5">
        <text>Selective cleavage of Gln-|-Gly bond in the poliovirus polyprotein. In other picornavirus reactions Glu may be substituted for Gln, and Ser or Thr for Gly.</text>
        <dbReference type="EC" id="3.4.22.28"/>
    </reaction>
</comment>
<comment type="subcellular location">
    <molecule>Capsid protein VP2</molecule>
    <subcellularLocation>
        <location>Virion</location>
    </subcellularLocation>
    <subcellularLocation>
        <location evidence="7">Host cytoplasm</location>
    </subcellularLocation>
</comment>
<comment type="subcellular location">
    <molecule>Capsid protein VP3</molecule>
    <subcellularLocation>
        <location>Virion</location>
    </subcellularLocation>
    <subcellularLocation>
        <location evidence="7">Host cytoplasm</location>
    </subcellularLocation>
</comment>
<comment type="subcellular location">
    <molecule>Capsid protein VP1</molecule>
    <subcellularLocation>
        <location>Virion</location>
    </subcellularLocation>
    <subcellularLocation>
        <location evidence="7">Host cytoplasm</location>
    </subcellularLocation>
</comment>
<comment type="subcellular location">
    <molecule>Protein 2B</molecule>
    <subcellularLocation>
        <location evidence="7">Host cytoplasmic vesicle membrane</location>
        <topology evidence="7">Peripheral membrane protein</topology>
        <orientation evidence="7">Cytoplasmic side</orientation>
    </subcellularLocation>
    <text evidence="1">Probably localizes to the surface of intracellular membrane vesicles that are induced after virus infection as the site for viral RNA replication. These vesicles are derived from the endoplasmic reticulum (By similarity).</text>
</comment>
<comment type="subcellular location">
    <molecule>Protein 2C</molecule>
    <subcellularLocation>
        <location evidence="7">Host cytoplasmic vesicle membrane</location>
        <topology evidence="7">Peripheral membrane protein</topology>
        <orientation evidence="7">Cytoplasmic side</orientation>
    </subcellularLocation>
    <text evidence="1">Probably localizes to the surface of intracellular membrane vesicles that are induced after virus infection as the site for viral RNA replication. These vesicles are derived from the endoplasmic reticulum. May associate with membranes through a N-terminal amphipathic helix (By similarity).</text>
</comment>
<comment type="subcellular location">
    <molecule>Protein 3A</molecule>
    <subcellularLocation>
        <location evidence="7">Host cytoplasmic vesicle membrane</location>
        <topology evidence="7">Peripheral membrane protein</topology>
        <orientation evidence="7">Cytoplasmic side</orientation>
    </subcellularLocation>
    <text evidence="1">Probably localizes to the surface of intracellular membrane vesicles that are induced after virus infection as the site for viral RNA replication. These vesicles are derived from the endoplasmic reticulum (By similarity).</text>
</comment>
<comment type="subcellular location">
    <molecule>Protein 3B</molecule>
    <subcellularLocation>
        <location evidence="7">Virion</location>
    </subcellularLocation>
</comment>
<comment type="subcellular location">
    <molecule>Protease 3C</molecule>
    <subcellularLocation>
        <location evidence="7">Host cytoplasm</location>
    </subcellularLocation>
</comment>
<comment type="subcellular location">
    <molecule>RNA-directed RNA polymerase 3D-POL</molecule>
    <subcellularLocation>
        <location evidence="7">Host cytoplasmic vesicle membrane</location>
        <topology evidence="7">Peripheral membrane protein</topology>
        <orientation evidence="7">Cytoplasmic side</orientation>
    </subcellularLocation>
    <text evidence="1">Interacts with membranes in a complex with viral protein 3AB. Probably localizes to the surface of intracellular membrane vesicles that are induced after virus infection as the site for viral RNA replication. These vesicles are derived from the endoplasmic reticulum (By similarity).</text>
</comment>
<comment type="PTM">
    <text evidence="1">Specific enzymatic cleavages by the viral protease in vivo yield a variety of precursors and mature proteins. During virion maturation, non-infectious particles are rendered infectious following cleavage of VP0. This maturation cleavage is followed by a conformational change of the particle (By similarity).</text>
</comment>
<comment type="PTM">
    <text evidence="1">VPg is uridylylated by the polymerase and is covalently linked to the 5'-end of genomic RNA. This uridylylated form acts as a nucleotide-peptide primer for the polymerase (By similarity).</text>
</comment>
<comment type="similarity">
    <text evidence="7">Belongs to the picornaviridae polyprotein family.</text>
</comment>
<sequence>MSKLFSTVGKTVDEVLSVLNDENTESYAGPDRTAVVGGGFLTTVDQSSVSTATMGSLQDVQYRTAVDIPGSRVTQGERFFLIDQREWNSTQSEWQLLGKIDIVKELLDQSYAVDGLLKYHSYARFGLDVIVQINPTSFQAGGLIAALVPYDQVDIESIAAMTTYCHGKLNCNINNVVRMKVPYIYSRGCYNLRNSAYSIWMLVIRVWSQLQLGSGTSTQITVTTLARFVDLELHGLSPLVAQMMRNEFRLSSSSNIVNLANYEDARAKVSLALGQEEFSRDSSSTGGELLHHFSQWTSIPCLAFTFTFPGTVGPGTQIWSTTVDPFSCNLRASSTVHPTNLSSIAGMFCFWRGDIVFEFQVFCTKYHSGRLMFVYVPGDENTKISTLTAKQASSGLTAVFDINGVNSTLVFRCPFISDTPYRVNPTTHKSLWPYATGKLVCYVYNRLNAPASVSPSVSINVYKSAVDLELYAPVYGVSPTNTSVFAQGKEDEGGFSSVPEVEQHVVEDKEPQGPLHVTPFGAVKAMEDPQLARKTPGTFPELAPGKPRHTVDHMDLYKFMGRAHYLWGHKFTKTDMQYTFQIPLSPIKEGFVTGTLRWFLSLFQLYRGSLDITMTFAGKTNVDGIVYFVPEGVAIETEREEQTPLLTLNYKTSVGAIRFNTGQTTNVQFRIPFYTPLEHIATHSKNAMDSVLGAITTQITNYSAQDEYLQVTYYISFNEDSQFSVPRAVPVVSSFTDTSSKTVMNTYWLDDDELVEESSHSSFDEIEEAQCSKCKMDLGDIVSCSGEKAKHFGVYVGDGVVHVDPEGNATNWFMKRKATVKKSKNLDKWCFALSPRIDRTLICETANLMVGREVEYDIFVKNCETYARGIASGDYGTKEGEKWKTLLSAVGVAAMTTTMMAMRHELLDTSLTKLPQKVGEVTNEVRKILEDTSAGVREFKEKVSSILRKTWPGKTSIKIMKWTCRIVKMCVGVGLCYAHGWDSKTVTAVVTMFSMDFLDLVIDGIEIGRMIIDELTTPKAQGLSEINQVLSIAKNAKDVIKMLIEIFCKVIERITGEHGKKIQWAQDKKEEIMNVLERAEKWITTSDDHSEGIECLKLVRSIQSVIRGEESLKELAGELRAVGTHVLNKLGRLDKPNAPILVRAEPTVLYLYGNRGGGKSLASMAIAVKLCKELGISHVEGIYTKPIMSDFWDGYAGQPVVIMDDLGQSTSDEDWTNFCQLVSSCPLRLNMANLEKKGTQFNSPFIIASSNLSHPCPKTVYCTDAIARRLHIKVKVSPKEEFSTHAMLDVAKAKKAGAYCNLDCLDFQKISDLASTPVSVQDIVLEMLHTNVDKQTLMGDIIQYWAQSNPREVFDTMAEGKNSGKYLWLFEKIKTSKWYILGCVGAVLSVSVLGVFAYHMIKNHFRDQQHDQSAYSAAIKPLRVVRLEQSDAQSVVDISNVVHGNLVRVGVGPNEARIHWLYNGLGVYDTYILMPYHGIKDADVDDDLYIERAGTIYSTNMKMVQVLFLESREGDLVLINVPRLPKFRDIRNHFSTEENIRRAEGMPGTLCTLDHERFTLVTESDLKMVEAATYVCEDDKGVRTDISVGRSWKAKACTVAGMCGGALVTSNNKMQNAIVGIHVAGGAHAISRVITKEMIEEMLKTRAQCSRIWKTEFVEEKISVGSKTKYHKSPLYDFCPQEVIKCPTKLFYQGEIDVMQVMLAKYSSPIVSEPLGYATVVEAYTNRMVSFFSEPRQLTYDECINGIEGLDAIDLKTSAGFPYNTLGLRKSDLIINGKMAQRLQQDVEKMEEDLHMNRSIQVVFTTCAKDELRPLSKVMLGKTRAIEACPVSFTILFRRYLGYALAQIQSHPGFHTGIAVGVDPDQDWHCMWYSIVTQCDLVVGLDFSNYDASLSPFMIYHAGRVLGQICGLDPRLVDRIMEPIVNSVHQLGSMRYYVHGSMPSGTPATSVLNSIINVVNICHVLCALEKISVFEVFKLFKILTYGDDVLLCIKKEYLDQKSFPLSSFVQGLEELGLSPTGADKMEVKVTPVHKMSFLKRTFYVDEWSICHPRISEETVYSMLAWKSDNASMKDLIETSIWFMFHHGPRKYVRFCTWLRGVLCRVGIGLYIPTYKELEVRYDRLVKYRFIDDSF</sequence>
<reference key="1">
    <citation type="journal article" date="1999" name="J. Gen. Virol.">
        <title>Avian encephalomyelitis virus is a picornavirus and is most closely related to hepatitis A virus.</title>
        <authorList>
            <person name="Marvil P."/>
            <person name="Knowles N.J."/>
            <person name="Mockett A.P."/>
            <person name="Britton P."/>
            <person name="Brown T.D.K."/>
            <person name="Cavanagh D."/>
        </authorList>
    </citation>
    <scope>NUCLEOTIDE SEQUENCE [MRNA]</scope>
</reference>
<keyword id="KW-0067">ATP-binding</keyword>
<keyword id="KW-0167">Capsid protein</keyword>
<keyword id="KW-0191">Covalent protein-RNA linkage</keyword>
<keyword id="KW-0347">Helicase</keyword>
<keyword id="KW-1035">Host cytoplasm</keyword>
<keyword id="KW-1036">Host cytoplasmic vesicle</keyword>
<keyword id="KW-1043">Host membrane</keyword>
<keyword id="KW-0945">Host-virus interaction</keyword>
<keyword id="KW-0378">Hydrolase</keyword>
<keyword id="KW-0407">Ion channel</keyword>
<keyword id="KW-0406">Ion transport</keyword>
<keyword id="KW-0472">Membrane</keyword>
<keyword id="KW-0547">Nucleotide-binding</keyword>
<keyword id="KW-0548">Nucleotidyltransferase</keyword>
<keyword id="KW-0597">Phosphoprotein</keyword>
<keyword id="KW-0645">Protease</keyword>
<keyword id="KW-1185">Reference proteome</keyword>
<keyword id="KW-0694">RNA-binding</keyword>
<keyword id="KW-0696">RNA-directed RNA polymerase</keyword>
<keyword id="KW-0788">Thiol protease</keyword>
<keyword id="KW-0808">Transferase</keyword>
<keyword id="KW-0813">Transport</keyword>
<keyword id="KW-1161">Viral attachment to host cell</keyword>
<keyword id="KW-1182">Viral ion channel</keyword>
<keyword id="KW-0693">Viral RNA replication</keyword>
<keyword id="KW-0946">Virion</keyword>
<keyword id="KW-1160">Virus entry into host cell</keyword>
<protein>
    <recommendedName>
        <fullName>Genome polyprotein</fullName>
    </recommendedName>
    <component>
        <recommendedName>
            <fullName>Capsid protein VP0</fullName>
        </recommendedName>
        <alternativeName>
            <fullName>VP4-VP2</fullName>
        </alternativeName>
    </component>
    <component>
        <recommendedName>
            <fullName>Capsid protein VP4</fullName>
        </recommendedName>
        <alternativeName>
            <fullName>P1A</fullName>
        </alternativeName>
        <alternativeName>
            <fullName>Virion protein 4</fullName>
        </alternativeName>
    </component>
    <component>
        <recommendedName>
            <fullName>Capsid protein VP2</fullName>
        </recommendedName>
        <alternativeName>
            <fullName>P1B</fullName>
        </alternativeName>
        <alternativeName>
            <fullName>Virion protein 2</fullName>
        </alternativeName>
    </component>
    <component>
        <recommendedName>
            <fullName>Capsid protein VP3</fullName>
        </recommendedName>
        <alternativeName>
            <fullName>P1C</fullName>
        </alternativeName>
        <alternativeName>
            <fullName>Virion protein 3</fullName>
        </alternativeName>
    </component>
    <component>
        <recommendedName>
            <fullName>Capsid protein VP1</fullName>
        </recommendedName>
        <alternativeName>
            <fullName>P1D</fullName>
        </alternativeName>
        <alternativeName>
            <fullName>Virion protein 1</fullName>
        </alternativeName>
    </component>
    <component>
        <recommendedName>
            <fullName>Protein 2A</fullName>
            <shortName>P2A</shortName>
        </recommendedName>
    </component>
    <component>
        <recommendedName>
            <fullName>Protein 2B</fullName>
            <shortName>P2B</shortName>
        </recommendedName>
    </component>
    <component>
        <recommendedName>
            <fullName>Protein 2C</fullName>
            <shortName>P2C</shortName>
            <ecNumber>3.6.1.15</ecNumber>
        </recommendedName>
    </component>
    <component>
        <recommendedName>
            <fullName>Protein 3A</fullName>
            <shortName>P3A</shortName>
        </recommendedName>
    </component>
    <component>
        <recommendedName>
            <fullName>Protein 3B</fullName>
            <shortName>P3B</shortName>
        </recommendedName>
        <alternativeName>
            <fullName>VPg</fullName>
        </alternativeName>
    </component>
    <component>
        <recommendedName>
            <fullName>Protease 3C</fullName>
            <shortName>P3C</shortName>
            <ecNumber>3.4.22.28</ecNumber>
        </recommendedName>
        <alternativeName>
            <fullName>Picornain 3C</fullName>
        </alternativeName>
    </component>
    <component>
        <recommendedName>
            <fullName>RNA-directed RNA polymerase 3D-POL</fullName>
            <shortName>P3D-POL</shortName>
            <ecNumber>2.7.7.48</ecNumber>
        </recommendedName>
    </component>
</protein>